<evidence type="ECO:0000255" key="1">
    <source>
        <dbReference type="HAMAP-Rule" id="MF_01333"/>
    </source>
</evidence>
<evidence type="ECO:0000305" key="2"/>
<keyword id="KW-1185">Reference proteome</keyword>
<keyword id="KW-0687">Ribonucleoprotein</keyword>
<keyword id="KW-0689">Ribosomal protein</keyword>
<keyword id="KW-0694">RNA-binding</keyword>
<keyword id="KW-0699">rRNA-binding</keyword>
<keyword id="KW-0820">tRNA-binding</keyword>
<sequence>MARLKDVYQNEVVQKLRAEFNYKNIMEVPRIEKVVINMGLGEAIQNVKILDSAASELGKITGQKAVITKAKKSIASFKLREGMPIGCMVTLRRERMYEFLDRLMNVALARVRDFKGVSGKAFDGQGNYTLGIKEQLIFPEINYDEIDKIKGLNVTIVTSAKNDEEGKALLKHMGMPFRN</sequence>
<gene>
    <name evidence="1" type="primary">rplE</name>
    <name type="ordered locus">Glov_1358</name>
</gene>
<dbReference type="EMBL" id="CP001089">
    <property type="protein sequence ID" value="ACD95079.1"/>
    <property type="molecule type" value="Genomic_DNA"/>
</dbReference>
<dbReference type="RefSeq" id="WP_012469424.1">
    <property type="nucleotide sequence ID" value="NC_010814.1"/>
</dbReference>
<dbReference type="SMR" id="B3E7U7"/>
<dbReference type="STRING" id="398767.Glov_1358"/>
<dbReference type="KEGG" id="glo:Glov_1358"/>
<dbReference type="eggNOG" id="COG0094">
    <property type="taxonomic scope" value="Bacteria"/>
</dbReference>
<dbReference type="HOGENOM" id="CLU_061015_2_1_7"/>
<dbReference type="OrthoDB" id="9806626at2"/>
<dbReference type="Proteomes" id="UP000002420">
    <property type="component" value="Chromosome"/>
</dbReference>
<dbReference type="GO" id="GO:1990904">
    <property type="term" value="C:ribonucleoprotein complex"/>
    <property type="evidence" value="ECO:0007669"/>
    <property type="project" value="UniProtKB-KW"/>
</dbReference>
<dbReference type="GO" id="GO:0005840">
    <property type="term" value="C:ribosome"/>
    <property type="evidence" value="ECO:0007669"/>
    <property type="project" value="UniProtKB-KW"/>
</dbReference>
<dbReference type="GO" id="GO:0019843">
    <property type="term" value="F:rRNA binding"/>
    <property type="evidence" value="ECO:0007669"/>
    <property type="project" value="UniProtKB-UniRule"/>
</dbReference>
<dbReference type="GO" id="GO:0003735">
    <property type="term" value="F:structural constituent of ribosome"/>
    <property type="evidence" value="ECO:0007669"/>
    <property type="project" value="InterPro"/>
</dbReference>
<dbReference type="GO" id="GO:0000049">
    <property type="term" value="F:tRNA binding"/>
    <property type="evidence" value="ECO:0007669"/>
    <property type="project" value="UniProtKB-UniRule"/>
</dbReference>
<dbReference type="GO" id="GO:0006412">
    <property type="term" value="P:translation"/>
    <property type="evidence" value="ECO:0007669"/>
    <property type="project" value="UniProtKB-UniRule"/>
</dbReference>
<dbReference type="FunFam" id="3.30.1440.10:FF:000001">
    <property type="entry name" value="50S ribosomal protein L5"/>
    <property type="match status" value="1"/>
</dbReference>
<dbReference type="Gene3D" id="3.30.1440.10">
    <property type="match status" value="1"/>
</dbReference>
<dbReference type="HAMAP" id="MF_01333_B">
    <property type="entry name" value="Ribosomal_uL5_B"/>
    <property type="match status" value="1"/>
</dbReference>
<dbReference type="InterPro" id="IPR002132">
    <property type="entry name" value="Ribosomal_uL5"/>
</dbReference>
<dbReference type="InterPro" id="IPR020930">
    <property type="entry name" value="Ribosomal_uL5_bac-type"/>
</dbReference>
<dbReference type="InterPro" id="IPR031309">
    <property type="entry name" value="Ribosomal_uL5_C"/>
</dbReference>
<dbReference type="InterPro" id="IPR020929">
    <property type="entry name" value="Ribosomal_uL5_CS"/>
</dbReference>
<dbReference type="InterPro" id="IPR022803">
    <property type="entry name" value="Ribosomal_uL5_dom_sf"/>
</dbReference>
<dbReference type="InterPro" id="IPR031310">
    <property type="entry name" value="Ribosomal_uL5_N"/>
</dbReference>
<dbReference type="NCBIfam" id="NF000585">
    <property type="entry name" value="PRK00010.1"/>
    <property type="match status" value="1"/>
</dbReference>
<dbReference type="PANTHER" id="PTHR11994">
    <property type="entry name" value="60S RIBOSOMAL PROTEIN L11-RELATED"/>
    <property type="match status" value="1"/>
</dbReference>
<dbReference type="Pfam" id="PF00281">
    <property type="entry name" value="Ribosomal_L5"/>
    <property type="match status" value="1"/>
</dbReference>
<dbReference type="Pfam" id="PF00673">
    <property type="entry name" value="Ribosomal_L5_C"/>
    <property type="match status" value="1"/>
</dbReference>
<dbReference type="PIRSF" id="PIRSF002161">
    <property type="entry name" value="Ribosomal_L5"/>
    <property type="match status" value="1"/>
</dbReference>
<dbReference type="SUPFAM" id="SSF55282">
    <property type="entry name" value="RL5-like"/>
    <property type="match status" value="1"/>
</dbReference>
<dbReference type="PROSITE" id="PS00358">
    <property type="entry name" value="RIBOSOMAL_L5"/>
    <property type="match status" value="1"/>
</dbReference>
<accession>B3E7U7</accession>
<feature type="chain" id="PRO_1000142406" description="Large ribosomal subunit protein uL5">
    <location>
        <begin position="1"/>
        <end position="179"/>
    </location>
</feature>
<proteinExistence type="inferred from homology"/>
<comment type="function">
    <text evidence="1">This is one of the proteins that bind and probably mediate the attachment of the 5S RNA into the large ribosomal subunit, where it forms part of the central protuberance. In the 70S ribosome it contacts protein S13 of the 30S subunit (bridge B1b), connecting the 2 subunits; this bridge is implicated in subunit movement. Contacts the P site tRNA; the 5S rRNA and some of its associated proteins might help stabilize positioning of ribosome-bound tRNAs.</text>
</comment>
<comment type="subunit">
    <text evidence="1">Part of the 50S ribosomal subunit; part of the 5S rRNA/L5/L18/L25 subcomplex. Contacts the 5S rRNA and the P site tRNA. Forms a bridge to the 30S subunit in the 70S ribosome.</text>
</comment>
<comment type="similarity">
    <text evidence="1">Belongs to the universal ribosomal protein uL5 family.</text>
</comment>
<reference key="1">
    <citation type="submission" date="2008-05" db="EMBL/GenBank/DDBJ databases">
        <title>Complete sequence of chromosome of Geobacter lovleyi SZ.</title>
        <authorList>
            <consortium name="US DOE Joint Genome Institute"/>
            <person name="Lucas S."/>
            <person name="Copeland A."/>
            <person name="Lapidus A."/>
            <person name="Glavina del Rio T."/>
            <person name="Dalin E."/>
            <person name="Tice H."/>
            <person name="Bruce D."/>
            <person name="Goodwin L."/>
            <person name="Pitluck S."/>
            <person name="Chertkov O."/>
            <person name="Meincke L."/>
            <person name="Brettin T."/>
            <person name="Detter J.C."/>
            <person name="Han C."/>
            <person name="Tapia R."/>
            <person name="Kuske C.R."/>
            <person name="Schmutz J."/>
            <person name="Larimer F."/>
            <person name="Land M."/>
            <person name="Hauser L."/>
            <person name="Kyrpides N."/>
            <person name="Mikhailova N."/>
            <person name="Sung Y."/>
            <person name="Fletcher K.E."/>
            <person name="Ritalahti K.M."/>
            <person name="Loeffler F.E."/>
            <person name="Richardson P."/>
        </authorList>
    </citation>
    <scope>NUCLEOTIDE SEQUENCE [LARGE SCALE GENOMIC DNA]</scope>
    <source>
        <strain>ATCC BAA-1151 / DSM 17278 / SZ</strain>
    </source>
</reference>
<protein>
    <recommendedName>
        <fullName evidence="1">Large ribosomal subunit protein uL5</fullName>
    </recommendedName>
    <alternativeName>
        <fullName evidence="2">50S ribosomal protein L5</fullName>
    </alternativeName>
</protein>
<organism>
    <name type="scientific">Trichlorobacter lovleyi (strain ATCC BAA-1151 / DSM 17278 / SZ)</name>
    <name type="common">Geobacter lovleyi</name>
    <dbReference type="NCBI Taxonomy" id="398767"/>
    <lineage>
        <taxon>Bacteria</taxon>
        <taxon>Pseudomonadati</taxon>
        <taxon>Thermodesulfobacteriota</taxon>
        <taxon>Desulfuromonadia</taxon>
        <taxon>Geobacterales</taxon>
        <taxon>Geobacteraceae</taxon>
        <taxon>Trichlorobacter</taxon>
    </lineage>
</organism>
<name>RL5_TRIL1</name>